<reference key="1">
    <citation type="submission" date="2007-07" db="EMBL/GenBank/DDBJ databases">
        <title>Complete sequence of chromosome of Shewanella baltica OS185.</title>
        <authorList>
            <consortium name="US DOE Joint Genome Institute"/>
            <person name="Copeland A."/>
            <person name="Lucas S."/>
            <person name="Lapidus A."/>
            <person name="Barry K."/>
            <person name="Glavina del Rio T."/>
            <person name="Dalin E."/>
            <person name="Tice H."/>
            <person name="Pitluck S."/>
            <person name="Sims D."/>
            <person name="Brettin T."/>
            <person name="Bruce D."/>
            <person name="Detter J.C."/>
            <person name="Han C."/>
            <person name="Schmutz J."/>
            <person name="Larimer F."/>
            <person name="Land M."/>
            <person name="Hauser L."/>
            <person name="Kyrpides N."/>
            <person name="Mikhailova N."/>
            <person name="Brettar I."/>
            <person name="Rodrigues J."/>
            <person name="Konstantinidis K."/>
            <person name="Tiedje J."/>
            <person name="Richardson P."/>
        </authorList>
    </citation>
    <scope>NUCLEOTIDE SEQUENCE [LARGE SCALE GENOMIC DNA]</scope>
    <source>
        <strain>OS185</strain>
    </source>
</reference>
<comment type="function">
    <text evidence="1">3'-to-5' exoribonuclease specific for small oligoribonucleotides.</text>
</comment>
<comment type="subcellular location">
    <subcellularLocation>
        <location evidence="1">Cytoplasm</location>
    </subcellularLocation>
</comment>
<comment type="similarity">
    <text evidence="1">Belongs to the oligoribonuclease family.</text>
</comment>
<keyword id="KW-0963">Cytoplasm</keyword>
<keyword id="KW-0269">Exonuclease</keyword>
<keyword id="KW-0378">Hydrolase</keyword>
<keyword id="KW-0540">Nuclease</keyword>
<protein>
    <recommendedName>
        <fullName evidence="1">Oligoribonuclease</fullName>
        <ecNumber evidence="1">3.1.15.-</ecNumber>
    </recommendedName>
</protein>
<evidence type="ECO:0000255" key="1">
    <source>
        <dbReference type="HAMAP-Rule" id="MF_00045"/>
    </source>
</evidence>
<organism>
    <name type="scientific">Shewanella baltica (strain OS185)</name>
    <dbReference type="NCBI Taxonomy" id="402882"/>
    <lineage>
        <taxon>Bacteria</taxon>
        <taxon>Pseudomonadati</taxon>
        <taxon>Pseudomonadota</taxon>
        <taxon>Gammaproteobacteria</taxon>
        <taxon>Alteromonadales</taxon>
        <taxon>Shewanellaceae</taxon>
        <taxon>Shewanella</taxon>
    </lineage>
</organism>
<name>ORN_SHEB8</name>
<feature type="chain" id="PRO_1000004284" description="Oligoribonuclease">
    <location>
        <begin position="1"/>
        <end position="181"/>
    </location>
</feature>
<feature type="domain" description="Exonuclease" evidence="1">
    <location>
        <begin position="8"/>
        <end position="171"/>
    </location>
</feature>
<feature type="active site" evidence="1">
    <location>
        <position position="129"/>
    </location>
</feature>
<dbReference type="EC" id="3.1.15.-" evidence="1"/>
<dbReference type="EMBL" id="CP000753">
    <property type="protein sequence ID" value="ABS09898.1"/>
    <property type="molecule type" value="Genomic_DNA"/>
</dbReference>
<dbReference type="RefSeq" id="WP_006080044.1">
    <property type="nucleotide sequence ID" value="NC_009665.1"/>
</dbReference>
<dbReference type="SMR" id="A6WSV9"/>
<dbReference type="GeneID" id="11773910"/>
<dbReference type="KEGG" id="sbm:Shew185_3774"/>
<dbReference type="HOGENOM" id="CLU_064761_2_0_6"/>
<dbReference type="GO" id="GO:0005737">
    <property type="term" value="C:cytoplasm"/>
    <property type="evidence" value="ECO:0007669"/>
    <property type="project" value="UniProtKB-SubCell"/>
</dbReference>
<dbReference type="GO" id="GO:0000175">
    <property type="term" value="F:3'-5'-RNA exonuclease activity"/>
    <property type="evidence" value="ECO:0007669"/>
    <property type="project" value="InterPro"/>
</dbReference>
<dbReference type="GO" id="GO:0003676">
    <property type="term" value="F:nucleic acid binding"/>
    <property type="evidence" value="ECO:0007669"/>
    <property type="project" value="InterPro"/>
</dbReference>
<dbReference type="GO" id="GO:0006259">
    <property type="term" value="P:DNA metabolic process"/>
    <property type="evidence" value="ECO:0007669"/>
    <property type="project" value="UniProtKB-ARBA"/>
</dbReference>
<dbReference type="CDD" id="cd06135">
    <property type="entry name" value="Orn"/>
    <property type="match status" value="1"/>
</dbReference>
<dbReference type="FunFam" id="3.30.420.10:FF:000003">
    <property type="entry name" value="Oligoribonuclease"/>
    <property type="match status" value="1"/>
</dbReference>
<dbReference type="Gene3D" id="3.30.420.10">
    <property type="entry name" value="Ribonuclease H-like superfamily/Ribonuclease H"/>
    <property type="match status" value="1"/>
</dbReference>
<dbReference type="HAMAP" id="MF_00045">
    <property type="entry name" value="Oligoribonuclease"/>
    <property type="match status" value="1"/>
</dbReference>
<dbReference type="InterPro" id="IPR013520">
    <property type="entry name" value="Exonuclease_RNaseT/DNA_pol3"/>
</dbReference>
<dbReference type="InterPro" id="IPR022894">
    <property type="entry name" value="Oligoribonuclease"/>
</dbReference>
<dbReference type="InterPro" id="IPR012337">
    <property type="entry name" value="RNaseH-like_sf"/>
</dbReference>
<dbReference type="InterPro" id="IPR036397">
    <property type="entry name" value="RNaseH_sf"/>
</dbReference>
<dbReference type="NCBIfam" id="NF003765">
    <property type="entry name" value="PRK05359.1"/>
    <property type="match status" value="1"/>
</dbReference>
<dbReference type="PANTHER" id="PTHR11046">
    <property type="entry name" value="OLIGORIBONUCLEASE, MITOCHONDRIAL"/>
    <property type="match status" value="1"/>
</dbReference>
<dbReference type="PANTHER" id="PTHR11046:SF0">
    <property type="entry name" value="OLIGORIBONUCLEASE, MITOCHONDRIAL"/>
    <property type="match status" value="1"/>
</dbReference>
<dbReference type="Pfam" id="PF00929">
    <property type="entry name" value="RNase_T"/>
    <property type="match status" value="1"/>
</dbReference>
<dbReference type="SMART" id="SM00479">
    <property type="entry name" value="EXOIII"/>
    <property type="match status" value="1"/>
</dbReference>
<dbReference type="SUPFAM" id="SSF53098">
    <property type="entry name" value="Ribonuclease H-like"/>
    <property type="match status" value="1"/>
</dbReference>
<gene>
    <name evidence="1" type="primary">orn</name>
    <name type="ordered locus">Shew185_3774</name>
</gene>
<accession>A6WSV9</accession>
<sequence>MTADVNNLIWIDLEMTGLEPDVDRIIEIATLVTDQELNIIGQGPVIAIHQSDDVLAAMDDWNQKHHGESGLIDRVRASQETEAQAVAKTIAFLEQYVPKGASPMCGNSIGQDRRFLNRYMRELEDYFHYRNVDVSTIKELVKRWSPETMAGFKKQNTHQALQDIQESIAELQYYRSKVFKI</sequence>
<proteinExistence type="inferred from homology"/>